<sequence>MSDELTTTVYYDEDADVSTINDETVAVLGYGSQGHAHALNLHESGVDVIVGLRQDSSSWADAEDAGLRVETPDVAAGEADRVVMLVPDTIQPAVYEAIEDELDAGDTLQFAHGFNIHYGQIEPPEDVDVTMVAPKSPGHLVRRTYERGEGTPGLIAVYQDATGNAKQESLAYAKGIGCTRAGVIETSFQEEVETDLFGEQAVLCGGVTEMVKAGFETLVDAGYAPEMAYFECLNELKLIVDLMYEGGHMGMWNSVSDTAEYGGLTRGEEVIDREGMEKILEEVQNGEFAREWINENQANRPAYKQYRDAEQNHQIEAVGENLRELFAWGEDADAETTEAPADD</sequence>
<evidence type="ECO:0000255" key="1">
    <source>
        <dbReference type="HAMAP-Rule" id="MF_00435"/>
    </source>
</evidence>
<evidence type="ECO:0000255" key="2">
    <source>
        <dbReference type="PROSITE-ProRule" id="PRU01197"/>
    </source>
</evidence>
<evidence type="ECO:0000255" key="3">
    <source>
        <dbReference type="PROSITE-ProRule" id="PRU01198"/>
    </source>
</evidence>
<keyword id="KW-0028">Amino-acid biosynthesis</keyword>
<keyword id="KW-0100">Branched-chain amino acid biosynthesis</keyword>
<keyword id="KW-0460">Magnesium</keyword>
<keyword id="KW-0479">Metal-binding</keyword>
<keyword id="KW-0521">NADP</keyword>
<keyword id="KW-0560">Oxidoreductase</keyword>
<keyword id="KW-1185">Reference proteome</keyword>
<protein>
    <recommendedName>
        <fullName evidence="1">Ketol-acid reductoisomerase (NADP(+))</fullName>
        <shortName evidence="1">KARI</shortName>
        <ecNumber evidence="1">1.1.1.86</ecNumber>
    </recommendedName>
    <alternativeName>
        <fullName evidence="1">Acetohydroxy-acid isomeroreductase</fullName>
        <shortName evidence="1">AHIR</shortName>
    </alternativeName>
    <alternativeName>
        <fullName evidence="1">Alpha-keto-beta-hydroxylacyl reductoisomerase</fullName>
    </alternativeName>
    <alternativeName>
        <fullName evidence="1">Ketol-acid reductoisomerase type 1</fullName>
    </alternativeName>
    <alternativeName>
        <fullName evidence="1">Ketol-acid reductoisomerase type I</fullName>
    </alternativeName>
</protein>
<dbReference type="EC" id="1.1.1.86" evidence="1"/>
<dbReference type="EMBL" id="AY596297">
    <property type="protein sequence ID" value="AAV45382.1"/>
    <property type="molecule type" value="Genomic_DNA"/>
</dbReference>
<dbReference type="RefSeq" id="WP_011222966.1">
    <property type="nucleotide sequence ID" value="NC_006396.1"/>
</dbReference>
<dbReference type="SMR" id="Q5V520"/>
<dbReference type="STRING" id="272569.rrnAC0332"/>
<dbReference type="PaxDb" id="272569-rrnAC0332"/>
<dbReference type="EnsemblBacteria" id="AAV45382">
    <property type="protein sequence ID" value="AAV45382"/>
    <property type="gene ID" value="rrnAC0332"/>
</dbReference>
<dbReference type="GeneID" id="40154622"/>
<dbReference type="KEGG" id="hma:rrnAC0332"/>
<dbReference type="PATRIC" id="fig|272569.17.peg.1122"/>
<dbReference type="eggNOG" id="arCOG04465">
    <property type="taxonomic scope" value="Archaea"/>
</dbReference>
<dbReference type="HOGENOM" id="CLU_033821_0_1_2"/>
<dbReference type="UniPathway" id="UPA00047">
    <property type="reaction ID" value="UER00056"/>
</dbReference>
<dbReference type="UniPathway" id="UPA00049">
    <property type="reaction ID" value="UER00060"/>
</dbReference>
<dbReference type="Proteomes" id="UP000001169">
    <property type="component" value="Chromosome I"/>
</dbReference>
<dbReference type="GO" id="GO:0005829">
    <property type="term" value="C:cytosol"/>
    <property type="evidence" value="ECO:0007669"/>
    <property type="project" value="TreeGrafter"/>
</dbReference>
<dbReference type="GO" id="GO:0004455">
    <property type="term" value="F:ketol-acid reductoisomerase activity"/>
    <property type="evidence" value="ECO:0007669"/>
    <property type="project" value="UniProtKB-UniRule"/>
</dbReference>
<dbReference type="GO" id="GO:0000287">
    <property type="term" value="F:magnesium ion binding"/>
    <property type="evidence" value="ECO:0007669"/>
    <property type="project" value="UniProtKB-UniRule"/>
</dbReference>
<dbReference type="GO" id="GO:0050661">
    <property type="term" value="F:NADP binding"/>
    <property type="evidence" value="ECO:0007669"/>
    <property type="project" value="InterPro"/>
</dbReference>
<dbReference type="GO" id="GO:0009097">
    <property type="term" value="P:isoleucine biosynthetic process"/>
    <property type="evidence" value="ECO:0007669"/>
    <property type="project" value="UniProtKB-UniRule"/>
</dbReference>
<dbReference type="GO" id="GO:0009099">
    <property type="term" value="P:L-valine biosynthetic process"/>
    <property type="evidence" value="ECO:0007669"/>
    <property type="project" value="UniProtKB-UniRule"/>
</dbReference>
<dbReference type="FunFam" id="3.40.50.720:FF:000023">
    <property type="entry name" value="Ketol-acid reductoisomerase (NADP(+))"/>
    <property type="match status" value="1"/>
</dbReference>
<dbReference type="Gene3D" id="6.10.240.10">
    <property type="match status" value="1"/>
</dbReference>
<dbReference type="Gene3D" id="3.40.50.720">
    <property type="entry name" value="NAD(P)-binding Rossmann-like Domain"/>
    <property type="match status" value="1"/>
</dbReference>
<dbReference type="HAMAP" id="MF_00435">
    <property type="entry name" value="IlvC"/>
    <property type="match status" value="1"/>
</dbReference>
<dbReference type="InterPro" id="IPR008927">
    <property type="entry name" value="6-PGluconate_DH-like_C_sf"/>
</dbReference>
<dbReference type="InterPro" id="IPR013023">
    <property type="entry name" value="KARI"/>
</dbReference>
<dbReference type="InterPro" id="IPR000506">
    <property type="entry name" value="KARI_C"/>
</dbReference>
<dbReference type="InterPro" id="IPR013116">
    <property type="entry name" value="KARI_N"/>
</dbReference>
<dbReference type="InterPro" id="IPR014359">
    <property type="entry name" value="KARI_prok"/>
</dbReference>
<dbReference type="InterPro" id="IPR036291">
    <property type="entry name" value="NAD(P)-bd_dom_sf"/>
</dbReference>
<dbReference type="NCBIfam" id="TIGR00465">
    <property type="entry name" value="ilvC"/>
    <property type="match status" value="1"/>
</dbReference>
<dbReference type="NCBIfam" id="NF004017">
    <property type="entry name" value="PRK05479.1"/>
    <property type="match status" value="1"/>
</dbReference>
<dbReference type="NCBIfam" id="NF009940">
    <property type="entry name" value="PRK13403.1"/>
    <property type="match status" value="1"/>
</dbReference>
<dbReference type="PANTHER" id="PTHR21371">
    <property type="entry name" value="KETOL-ACID REDUCTOISOMERASE, MITOCHONDRIAL"/>
    <property type="match status" value="1"/>
</dbReference>
<dbReference type="PANTHER" id="PTHR21371:SF1">
    <property type="entry name" value="KETOL-ACID REDUCTOISOMERASE, MITOCHONDRIAL"/>
    <property type="match status" value="1"/>
</dbReference>
<dbReference type="Pfam" id="PF01450">
    <property type="entry name" value="KARI_C"/>
    <property type="match status" value="1"/>
</dbReference>
<dbReference type="Pfam" id="PF07991">
    <property type="entry name" value="KARI_N"/>
    <property type="match status" value="1"/>
</dbReference>
<dbReference type="PIRSF" id="PIRSF000116">
    <property type="entry name" value="IlvC_gammaproteo"/>
    <property type="match status" value="1"/>
</dbReference>
<dbReference type="SUPFAM" id="SSF48179">
    <property type="entry name" value="6-phosphogluconate dehydrogenase C-terminal domain-like"/>
    <property type="match status" value="1"/>
</dbReference>
<dbReference type="SUPFAM" id="SSF51735">
    <property type="entry name" value="NAD(P)-binding Rossmann-fold domains"/>
    <property type="match status" value="1"/>
</dbReference>
<dbReference type="PROSITE" id="PS51851">
    <property type="entry name" value="KARI_C"/>
    <property type="match status" value="1"/>
</dbReference>
<dbReference type="PROSITE" id="PS51850">
    <property type="entry name" value="KARI_N"/>
    <property type="match status" value="1"/>
</dbReference>
<comment type="function">
    <text evidence="1">Involved in the biosynthesis of branched-chain amino acids (BCAA). Catalyzes an alkyl-migration followed by a ketol-acid reduction of (S)-2-acetolactate (S2AL) to yield (R)-2,3-dihydroxy-isovalerate. In the isomerase reaction, S2AL is rearranged via a Mg-dependent methyl migration to produce 3-hydroxy-3-methyl-2-ketobutyrate (HMKB). In the reductase reaction, this 2-ketoacid undergoes a metal-dependent reduction by NADPH to yield (R)-2,3-dihydroxy-isovalerate.</text>
</comment>
<comment type="catalytic activity">
    <reaction evidence="1">
        <text>(2R)-2,3-dihydroxy-3-methylbutanoate + NADP(+) = (2S)-2-acetolactate + NADPH + H(+)</text>
        <dbReference type="Rhea" id="RHEA:22068"/>
        <dbReference type="ChEBI" id="CHEBI:15378"/>
        <dbReference type="ChEBI" id="CHEBI:49072"/>
        <dbReference type="ChEBI" id="CHEBI:57783"/>
        <dbReference type="ChEBI" id="CHEBI:58349"/>
        <dbReference type="ChEBI" id="CHEBI:58476"/>
        <dbReference type="EC" id="1.1.1.86"/>
    </reaction>
</comment>
<comment type="catalytic activity">
    <reaction evidence="1">
        <text>(2R,3R)-2,3-dihydroxy-3-methylpentanoate + NADP(+) = (S)-2-ethyl-2-hydroxy-3-oxobutanoate + NADPH + H(+)</text>
        <dbReference type="Rhea" id="RHEA:13493"/>
        <dbReference type="ChEBI" id="CHEBI:15378"/>
        <dbReference type="ChEBI" id="CHEBI:49256"/>
        <dbReference type="ChEBI" id="CHEBI:49258"/>
        <dbReference type="ChEBI" id="CHEBI:57783"/>
        <dbReference type="ChEBI" id="CHEBI:58349"/>
        <dbReference type="EC" id="1.1.1.86"/>
    </reaction>
</comment>
<comment type="cofactor">
    <cofactor evidence="1">
        <name>Mg(2+)</name>
        <dbReference type="ChEBI" id="CHEBI:18420"/>
    </cofactor>
    <text evidence="1">Binds 2 magnesium ions per subunit.</text>
</comment>
<comment type="pathway">
    <text evidence="1">Amino-acid biosynthesis; L-isoleucine biosynthesis; L-isoleucine from 2-oxobutanoate: step 2/4.</text>
</comment>
<comment type="pathway">
    <text evidence="1">Amino-acid biosynthesis; L-valine biosynthesis; L-valine from pyruvate: step 2/4.</text>
</comment>
<comment type="similarity">
    <text evidence="1">Belongs to the ketol-acid reductoisomerase family.</text>
</comment>
<reference key="1">
    <citation type="journal article" date="2004" name="Genome Res.">
        <title>Genome sequence of Haloarcula marismortui: a halophilic archaeon from the Dead Sea.</title>
        <authorList>
            <person name="Baliga N.S."/>
            <person name="Bonneau R."/>
            <person name="Facciotti M.T."/>
            <person name="Pan M."/>
            <person name="Glusman G."/>
            <person name="Deutsch E.W."/>
            <person name="Shannon P."/>
            <person name="Chiu Y."/>
            <person name="Weng R.S."/>
            <person name="Gan R.R."/>
            <person name="Hung P."/>
            <person name="Date S.V."/>
            <person name="Marcotte E."/>
            <person name="Hood L."/>
            <person name="Ng W.V."/>
        </authorList>
    </citation>
    <scope>NUCLEOTIDE SEQUENCE [LARGE SCALE GENOMIC DNA]</scope>
    <source>
        <strain>ATCC 43049 / DSM 3752 / JCM 8966 / VKM B-1809</strain>
    </source>
</reference>
<proteinExistence type="inferred from homology"/>
<feature type="chain" id="PRO_0000226216" description="Ketol-acid reductoisomerase (NADP(+))">
    <location>
        <begin position="1"/>
        <end position="343"/>
    </location>
</feature>
<feature type="domain" description="KARI N-terminal Rossmann" evidence="2">
    <location>
        <begin position="7"/>
        <end position="186"/>
    </location>
</feature>
<feature type="domain" description="KARI C-terminal knotted" evidence="3">
    <location>
        <begin position="187"/>
        <end position="329"/>
    </location>
</feature>
<feature type="active site" evidence="1">
    <location>
        <position position="112"/>
    </location>
</feature>
<feature type="binding site" evidence="1">
    <location>
        <begin position="30"/>
        <end position="33"/>
    </location>
    <ligand>
        <name>NADP(+)</name>
        <dbReference type="ChEBI" id="CHEBI:58349"/>
    </ligand>
</feature>
<feature type="binding site" evidence="1">
    <location>
        <position position="53"/>
    </location>
    <ligand>
        <name>NADP(+)</name>
        <dbReference type="ChEBI" id="CHEBI:58349"/>
    </ligand>
</feature>
<feature type="binding site" evidence="1">
    <location>
        <position position="56"/>
    </location>
    <ligand>
        <name>NADP(+)</name>
        <dbReference type="ChEBI" id="CHEBI:58349"/>
    </ligand>
</feature>
<feature type="binding site" evidence="1">
    <location>
        <position position="58"/>
    </location>
    <ligand>
        <name>NADP(+)</name>
        <dbReference type="ChEBI" id="CHEBI:58349"/>
    </ligand>
</feature>
<feature type="binding site" evidence="1">
    <location>
        <begin position="88"/>
        <end position="91"/>
    </location>
    <ligand>
        <name>NADP(+)</name>
        <dbReference type="ChEBI" id="CHEBI:58349"/>
    </ligand>
</feature>
<feature type="binding site" evidence="1">
    <location>
        <position position="138"/>
    </location>
    <ligand>
        <name>NADP(+)</name>
        <dbReference type="ChEBI" id="CHEBI:58349"/>
    </ligand>
</feature>
<feature type="binding site" evidence="1">
    <location>
        <position position="195"/>
    </location>
    <ligand>
        <name>Mg(2+)</name>
        <dbReference type="ChEBI" id="CHEBI:18420"/>
        <label>1</label>
    </ligand>
</feature>
<feature type="binding site" evidence="1">
    <location>
        <position position="195"/>
    </location>
    <ligand>
        <name>Mg(2+)</name>
        <dbReference type="ChEBI" id="CHEBI:18420"/>
        <label>2</label>
    </ligand>
</feature>
<feature type="binding site" evidence="1">
    <location>
        <position position="199"/>
    </location>
    <ligand>
        <name>Mg(2+)</name>
        <dbReference type="ChEBI" id="CHEBI:18420"/>
        <label>1</label>
    </ligand>
</feature>
<feature type="binding site" evidence="1">
    <location>
        <position position="231"/>
    </location>
    <ligand>
        <name>Mg(2+)</name>
        <dbReference type="ChEBI" id="CHEBI:18420"/>
        <label>2</label>
    </ligand>
</feature>
<feature type="binding site" evidence="1">
    <location>
        <position position="235"/>
    </location>
    <ligand>
        <name>Mg(2+)</name>
        <dbReference type="ChEBI" id="CHEBI:18420"/>
        <label>2</label>
    </ligand>
</feature>
<feature type="binding site" evidence="1">
    <location>
        <position position="256"/>
    </location>
    <ligand>
        <name>substrate</name>
    </ligand>
</feature>
<gene>
    <name evidence="1" type="primary">ilvC</name>
    <name type="ordered locus">rrnAC0332</name>
</gene>
<organism>
    <name type="scientific">Haloarcula marismortui (strain ATCC 43049 / DSM 3752 / JCM 8966 / VKM B-1809)</name>
    <name type="common">Halobacterium marismortui</name>
    <dbReference type="NCBI Taxonomy" id="272569"/>
    <lineage>
        <taxon>Archaea</taxon>
        <taxon>Methanobacteriati</taxon>
        <taxon>Methanobacteriota</taxon>
        <taxon>Stenosarchaea group</taxon>
        <taxon>Halobacteria</taxon>
        <taxon>Halobacteriales</taxon>
        <taxon>Haloarculaceae</taxon>
        <taxon>Haloarcula</taxon>
    </lineage>
</organism>
<name>ILVC_HALMA</name>
<accession>Q5V520</accession>